<comment type="function">
    <text evidence="1">Fluoride-specific ion channel. Important for reducing fluoride concentration in the cell, thus reducing its toxicity.</text>
</comment>
<comment type="catalytic activity">
    <reaction evidence="1">
        <text>fluoride(in) = fluoride(out)</text>
        <dbReference type="Rhea" id="RHEA:76159"/>
        <dbReference type="ChEBI" id="CHEBI:17051"/>
    </reaction>
    <physiologicalReaction direction="left-to-right" evidence="1">
        <dbReference type="Rhea" id="RHEA:76160"/>
    </physiologicalReaction>
</comment>
<comment type="activity regulation">
    <text evidence="1">Na(+) is not transported, but it plays an essential structural role and its presence is essential for fluoride channel function.</text>
</comment>
<comment type="subcellular location">
    <subcellularLocation>
        <location evidence="1">Cell inner membrane</location>
        <topology evidence="1">Multi-pass membrane protein</topology>
    </subcellularLocation>
</comment>
<comment type="similarity">
    <text evidence="1">Belongs to the fluoride channel Fluc/FEX (TC 1.A.43) family.</text>
</comment>
<feature type="chain" id="PRO_1000125163" description="Fluoride-specific ion channel FluC">
    <location>
        <begin position="1"/>
        <end position="125"/>
    </location>
</feature>
<feature type="transmembrane region" description="Helical" evidence="1">
    <location>
        <begin position="3"/>
        <end position="23"/>
    </location>
</feature>
<feature type="transmembrane region" description="Helical" evidence="1">
    <location>
        <begin position="33"/>
        <end position="53"/>
    </location>
</feature>
<feature type="transmembrane region" description="Helical" evidence="1">
    <location>
        <begin position="65"/>
        <end position="85"/>
    </location>
</feature>
<feature type="transmembrane region" description="Helical" evidence="1">
    <location>
        <begin position="99"/>
        <end position="119"/>
    </location>
</feature>
<feature type="binding site" evidence="1">
    <location>
        <position position="75"/>
    </location>
    <ligand>
        <name>Na(+)</name>
        <dbReference type="ChEBI" id="CHEBI:29101"/>
        <note>structural</note>
    </ligand>
</feature>
<feature type="binding site" evidence="1">
    <location>
        <position position="78"/>
    </location>
    <ligand>
        <name>Na(+)</name>
        <dbReference type="ChEBI" id="CHEBI:29101"/>
        <note>structural</note>
    </ligand>
</feature>
<accession>A6LJF8</accession>
<keyword id="KW-0997">Cell inner membrane</keyword>
<keyword id="KW-1003">Cell membrane</keyword>
<keyword id="KW-0407">Ion channel</keyword>
<keyword id="KW-0406">Ion transport</keyword>
<keyword id="KW-0472">Membrane</keyword>
<keyword id="KW-0479">Metal-binding</keyword>
<keyword id="KW-0915">Sodium</keyword>
<keyword id="KW-0812">Transmembrane</keyword>
<keyword id="KW-1133">Transmembrane helix</keyword>
<keyword id="KW-0813">Transport</keyword>
<name>FLUC_THEM4</name>
<reference key="1">
    <citation type="submission" date="2007-05" db="EMBL/GenBank/DDBJ databases">
        <title>Complete sequence of Thermosipho melanesiensis BI429.</title>
        <authorList>
            <consortium name="US DOE Joint Genome Institute"/>
            <person name="Copeland A."/>
            <person name="Lucas S."/>
            <person name="Lapidus A."/>
            <person name="Barry K."/>
            <person name="Glavina del Rio T."/>
            <person name="Dalin E."/>
            <person name="Tice H."/>
            <person name="Pitluck S."/>
            <person name="Chertkov O."/>
            <person name="Brettin T."/>
            <person name="Bruce D."/>
            <person name="Detter J.C."/>
            <person name="Han C."/>
            <person name="Schmutz J."/>
            <person name="Larimer F."/>
            <person name="Land M."/>
            <person name="Hauser L."/>
            <person name="Kyrpides N."/>
            <person name="Mikhailova N."/>
            <person name="Nelson K."/>
            <person name="Gogarten J.P."/>
            <person name="Noll K."/>
            <person name="Richardson P."/>
        </authorList>
    </citation>
    <scope>NUCLEOTIDE SEQUENCE [LARGE SCALE GENOMIC DNA]</scope>
    <source>
        <strain>DSM 12029 / CIP 104789 / BI429</strain>
    </source>
</reference>
<evidence type="ECO:0000255" key="1">
    <source>
        <dbReference type="HAMAP-Rule" id="MF_00454"/>
    </source>
</evidence>
<sequence>MKFILIAIGGAFGALFRYFVSKVFNTHFPFNYIPLGTVIVNVLGAFLLSFVLFSSIERFEVNPNFVLFFGTGFLGAFTTFSTFAYETLSLFLTSPFRALVYFFANLFFGFFAAFFGMVLGRGKFL</sequence>
<proteinExistence type="inferred from homology"/>
<dbReference type="EMBL" id="CP000716">
    <property type="protein sequence ID" value="ABR30059.1"/>
    <property type="molecule type" value="Genomic_DNA"/>
</dbReference>
<dbReference type="RefSeq" id="WP_012056420.1">
    <property type="nucleotide sequence ID" value="NC_009616.1"/>
</dbReference>
<dbReference type="SMR" id="A6LJF8"/>
<dbReference type="STRING" id="391009.Tmel_0182"/>
<dbReference type="KEGG" id="tme:Tmel_0182"/>
<dbReference type="eggNOG" id="COG0239">
    <property type="taxonomic scope" value="Bacteria"/>
</dbReference>
<dbReference type="HOGENOM" id="CLU_114342_2_3_0"/>
<dbReference type="OrthoDB" id="9815830at2"/>
<dbReference type="Proteomes" id="UP000001110">
    <property type="component" value="Chromosome"/>
</dbReference>
<dbReference type="GO" id="GO:0005886">
    <property type="term" value="C:plasma membrane"/>
    <property type="evidence" value="ECO:0007669"/>
    <property type="project" value="UniProtKB-SubCell"/>
</dbReference>
<dbReference type="GO" id="GO:0062054">
    <property type="term" value="F:fluoride channel activity"/>
    <property type="evidence" value="ECO:0007669"/>
    <property type="project" value="UniProtKB-UniRule"/>
</dbReference>
<dbReference type="GO" id="GO:0046872">
    <property type="term" value="F:metal ion binding"/>
    <property type="evidence" value="ECO:0007669"/>
    <property type="project" value="UniProtKB-KW"/>
</dbReference>
<dbReference type="GO" id="GO:0140114">
    <property type="term" value="P:cellular detoxification of fluoride"/>
    <property type="evidence" value="ECO:0007669"/>
    <property type="project" value="UniProtKB-UniRule"/>
</dbReference>
<dbReference type="HAMAP" id="MF_00454">
    <property type="entry name" value="FluC"/>
    <property type="match status" value="1"/>
</dbReference>
<dbReference type="InterPro" id="IPR003691">
    <property type="entry name" value="FluC"/>
</dbReference>
<dbReference type="NCBIfam" id="TIGR00494">
    <property type="entry name" value="crcB"/>
    <property type="match status" value="1"/>
</dbReference>
<dbReference type="PANTHER" id="PTHR28259">
    <property type="entry name" value="FLUORIDE EXPORT PROTEIN 1-RELATED"/>
    <property type="match status" value="1"/>
</dbReference>
<dbReference type="PANTHER" id="PTHR28259:SF18">
    <property type="entry name" value="FLUORIDE-SPECIFIC ION CHANNEL FLUC"/>
    <property type="match status" value="1"/>
</dbReference>
<dbReference type="Pfam" id="PF02537">
    <property type="entry name" value="CRCB"/>
    <property type="match status" value="1"/>
</dbReference>
<organism>
    <name type="scientific">Thermosipho melanesiensis (strain DSM 12029 / CIP 104789 / BI429)</name>
    <dbReference type="NCBI Taxonomy" id="391009"/>
    <lineage>
        <taxon>Bacteria</taxon>
        <taxon>Thermotogati</taxon>
        <taxon>Thermotogota</taxon>
        <taxon>Thermotogae</taxon>
        <taxon>Thermotogales</taxon>
        <taxon>Fervidobacteriaceae</taxon>
        <taxon>Thermosipho</taxon>
    </lineage>
</organism>
<protein>
    <recommendedName>
        <fullName evidence="1">Fluoride-specific ion channel FluC</fullName>
    </recommendedName>
</protein>
<gene>
    <name evidence="1" type="primary">fluC</name>
    <name evidence="1" type="synonym">crcB</name>
    <name type="ordered locus">Tmel_0182</name>
</gene>